<organism>
    <name type="scientific">Homo sapiens</name>
    <name type="common">Human</name>
    <dbReference type="NCBI Taxonomy" id="9606"/>
    <lineage>
        <taxon>Eukaryota</taxon>
        <taxon>Metazoa</taxon>
        <taxon>Chordata</taxon>
        <taxon>Craniata</taxon>
        <taxon>Vertebrata</taxon>
        <taxon>Euteleostomi</taxon>
        <taxon>Mammalia</taxon>
        <taxon>Eutheria</taxon>
        <taxon>Euarchontoglires</taxon>
        <taxon>Primates</taxon>
        <taxon>Haplorrhini</taxon>
        <taxon>Catarrhini</taxon>
        <taxon>Hominidae</taxon>
        <taxon>Homo</taxon>
    </lineage>
</organism>
<name>OR1S1_HUMAN</name>
<feature type="chain" id="PRO_0000150451" description="Olfactory receptor 1S1">
    <location>
        <begin position="1"/>
        <end position="325"/>
    </location>
</feature>
<feature type="topological domain" description="Extracellular" evidence="1">
    <location>
        <begin position="1"/>
        <end position="38"/>
    </location>
</feature>
<feature type="transmembrane region" description="Helical; Name=1" evidence="1">
    <location>
        <begin position="39"/>
        <end position="62"/>
    </location>
</feature>
<feature type="topological domain" description="Cytoplasmic" evidence="1">
    <location>
        <begin position="63"/>
        <end position="70"/>
    </location>
</feature>
<feature type="transmembrane region" description="Helical; Name=2" evidence="1">
    <location>
        <begin position="71"/>
        <end position="92"/>
    </location>
</feature>
<feature type="topological domain" description="Extracellular" evidence="1">
    <location>
        <begin position="93"/>
        <end position="113"/>
    </location>
</feature>
<feature type="transmembrane region" description="Helical; Name=3" evidence="1">
    <location>
        <begin position="114"/>
        <end position="133"/>
    </location>
</feature>
<feature type="topological domain" description="Cytoplasmic" evidence="1">
    <location>
        <begin position="134"/>
        <end position="152"/>
    </location>
</feature>
<feature type="transmembrane region" description="Helical; Name=4" evidence="1">
    <location>
        <begin position="153"/>
        <end position="171"/>
    </location>
</feature>
<feature type="topological domain" description="Extracellular" evidence="1">
    <location>
        <begin position="172"/>
        <end position="208"/>
    </location>
</feature>
<feature type="transmembrane region" description="Helical; Name=5" evidence="1">
    <location>
        <begin position="209"/>
        <end position="232"/>
    </location>
</feature>
<feature type="topological domain" description="Cytoplasmic" evidence="1">
    <location>
        <begin position="233"/>
        <end position="249"/>
    </location>
</feature>
<feature type="transmembrane region" description="Helical; Name=6" evidence="1">
    <location>
        <begin position="250"/>
        <end position="272"/>
    </location>
</feature>
<feature type="topological domain" description="Extracellular" evidence="1">
    <location>
        <begin position="273"/>
        <end position="285"/>
    </location>
</feature>
<feature type="transmembrane region" description="Helical; Name=7" evidence="1">
    <location>
        <begin position="286"/>
        <end position="305"/>
    </location>
</feature>
<feature type="topological domain" description="Cytoplasmic" evidence="1">
    <location>
        <begin position="306"/>
        <end position="325"/>
    </location>
</feature>
<feature type="glycosylation site" description="N-linked (GlcNAc...) asparagine" evidence="1">
    <location>
        <position position="18"/>
    </location>
</feature>
<feature type="disulfide bond" evidence="2">
    <location>
        <begin position="110"/>
        <end position="202"/>
    </location>
</feature>
<feature type="sequence variant" id="VAR_048039" description="In dbSNP:rs1966836.">
    <original>S</original>
    <variation>G</variation>
    <location>
        <position position="5"/>
    </location>
</feature>
<feature type="sequence variant" id="VAR_048040" description="In dbSNP:rs1966835.">
    <original>I</original>
    <variation>T</variation>
    <location>
        <position position="123"/>
    </location>
</feature>
<feature type="sequence variant" id="VAR_048041" description="In dbSNP:rs1966834.">
    <original>H</original>
    <variation>R</variation>
    <location>
        <position position="135"/>
    </location>
</feature>
<feature type="sequence variant" id="VAR_048042" description="In dbSNP:rs1993088.">
    <original>N</original>
    <variation>D</variation>
    <location>
        <position position="183"/>
    </location>
</feature>
<feature type="sequence variant" id="VAR_048043" description="In dbSNP:rs2867400.">
    <original>L</original>
    <variation>M</variation>
    <location>
        <position position="206"/>
    </location>
</feature>
<feature type="sequence variant" id="VAR_048044" description="In dbSNP:rs2903566.">
    <original>S</original>
    <variation>I</variation>
    <location>
        <position position="227"/>
    </location>
</feature>
<gene>
    <name type="primary">OR1S1</name>
</gene>
<comment type="function">
    <text evidence="3">Odorant receptor.</text>
</comment>
<comment type="subcellular location">
    <subcellularLocation>
        <location>Cell membrane</location>
        <topology>Multi-pass membrane protein</topology>
    </subcellularLocation>
</comment>
<comment type="similarity">
    <text evidence="2">Belongs to the G-protein coupled receptor 1 family.</text>
</comment>
<comment type="caution">
    <text evidence="3">It is uncertain whether Met-1 or Met-14 is the initiator.</text>
</comment>
<comment type="sequence caution" evidence="3">
    <conflict type="erroneous initiation">
        <sequence resource="EMBL-CDS" id="BAC05745"/>
    </conflict>
</comment>
<comment type="online information" name="Human Olfactory Receptor Data Exploratorium (HORDE)">
    <link uri="http://genome.weizmann.ac.il/horde/card/index/symbol:OR1S1"/>
</comment>
<proteinExistence type="inferred from homology"/>
<accession>Q8NH92</accession>
<accession>Q6IFG3</accession>
<reference key="1">
    <citation type="submission" date="2001-07" db="EMBL/GenBank/DDBJ databases">
        <title>Genome-wide discovery and analysis of human seven transmembrane helix receptor genes.</title>
        <authorList>
            <person name="Suwa M."/>
            <person name="Sato T."/>
            <person name="Okouchi I."/>
            <person name="Arita M."/>
            <person name="Futami K."/>
            <person name="Matsumoto S."/>
            <person name="Tsutsumi S."/>
            <person name="Aburatani H."/>
            <person name="Asai K."/>
            <person name="Akiyama Y."/>
        </authorList>
    </citation>
    <scope>NUCLEOTIDE SEQUENCE [GENOMIC DNA]</scope>
</reference>
<reference key="2">
    <citation type="submission" date="2005-07" db="EMBL/GenBank/DDBJ databases">
        <authorList>
            <person name="Mural R.J."/>
            <person name="Istrail S."/>
            <person name="Sutton G.G."/>
            <person name="Florea L."/>
            <person name="Halpern A.L."/>
            <person name="Mobarry C.M."/>
            <person name="Lippert R."/>
            <person name="Walenz B."/>
            <person name="Shatkay H."/>
            <person name="Dew I."/>
            <person name="Miller J.R."/>
            <person name="Flanigan M.J."/>
            <person name="Edwards N.J."/>
            <person name="Bolanos R."/>
            <person name="Fasulo D."/>
            <person name="Halldorsson B.V."/>
            <person name="Hannenhalli S."/>
            <person name="Turner R."/>
            <person name="Yooseph S."/>
            <person name="Lu F."/>
            <person name="Nusskern D.R."/>
            <person name="Shue B.C."/>
            <person name="Zheng X.H."/>
            <person name="Zhong F."/>
            <person name="Delcher A.L."/>
            <person name="Huson D.H."/>
            <person name="Kravitz S.A."/>
            <person name="Mouchard L."/>
            <person name="Reinert K."/>
            <person name="Remington K.A."/>
            <person name="Clark A.G."/>
            <person name="Waterman M.S."/>
            <person name="Eichler E.E."/>
            <person name="Adams M.D."/>
            <person name="Hunkapiller M.W."/>
            <person name="Myers E.W."/>
            <person name="Venter J.C."/>
        </authorList>
    </citation>
    <scope>NUCLEOTIDE SEQUENCE [LARGE SCALE GENOMIC DNA]</scope>
</reference>
<reference key="3">
    <citation type="journal article" date="2004" name="Proc. Natl. Acad. Sci. U.S.A.">
        <title>The human olfactory receptor gene family.</title>
        <authorList>
            <person name="Malnic B."/>
            <person name="Godfrey P.A."/>
            <person name="Buck L.B."/>
        </authorList>
    </citation>
    <scope>IDENTIFICATION</scope>
</reference>
<reference key="4">
    <citation type="journal article" date="2004" name="Proc. Natl. Acad. Sci. U.S.A.">
        <authorList>
            <person name="Malnic B."/>
            <person name="Godfrey P.A."/>
            <person name="Buck L.B."/>
        </authorList>
    </citation>
    <scope>ERRATUM OF PUBMED:14983052</scope>
</reference>
<protein>
    <recommendedName>
        <fullName>Olfactory receptor 1S1</fullName>
    </recommendedName>
    <alternativeName>
        <fullName>Olfactory receptor OR11-232</fullName>
    </alternativeName>
</protein>
<sequence length="325" mass="36707">MKTFSSFLQIGRNMHQGNQTTITEFILLGFFKQDEHQNLLFVLFLGMYLVTVIGNGLIIVAISLDTYLHTPMYLFLANLSFADISSISNSVPKMLVNIQTKSQSISYESCITQMYFSIVFVVIDNLLLGTMAYDHFVAICHPLNYTILMRPRFGILLTVISWFLSNIIALTHTLLLIQLLFCNHNTLPHFFCDLAPLLKLSCSDTLINELVLFIVGLSVIIFPFTLSFFSYVCIIRAVLRVSSTQGKWKAFSTCGSHLTVVLLFYGTIVGVYFFPSSTHPEDTDKIGAVLFTVVTPMINPFIYSLRNKDMKGALRKLINRKISSL</sequence>
<evidence type="ECO:0000255" key="1"/>
<evidence type="ECO:0000255" key="2">
    <source>
        <dbReference type="PROSITE-ProRule" id="PRU00521"/>
    </source>
</evidence>
<evidence type="ECO:0000305" key="3"/>
<dbReference type="EMBL" id="AB065493">
    <property type="protein sequence ID" value="BAC05745.1"/>
    <property type="status" value="ALT_INIT"/>
    <property type="molecule type" value="Genomic_DNA"/>
</dbReference>
<dbReference type="EMBL" id="CH471076">
    <property type="protein sequence ID" value="EAW73800.1"/>
    <property type="molecule type" value="Genomic_DNA"/>
</dbReference>
<dbReference type="EMBL" id="BK004299">
    <property type="protein sequence ID" value="DAA04697.1"/>
    <property type="molecule type" value="Genomic_DNA"/>
</dbReference>
<dbReference type="RefSeq" id="NP_001004458.1">
    <property type="nucleotide sequence ID" value="NM_001004458.1"/>
</dbReference>
<dbReference type="SMR" id="Q8NH92"/>
<dbReference type="FunCoup" id="Q8NH92">
    <property type="interactions" value="469"/>
</dbReference>
<dbReference type="STRING" id="9606.ENSP00000485156"/>
<dbReference type="GlyCosmos" id="Q8NH92">
    <property type="glycosylation" value="1 site, No reported glycans"/>
</dbReference>
<dbReference type="GlyGen" id="Q8NH92">
    <property type="glycosylation" value="1 site"/>
</dbReference>
<dbReference type="iPTMnet" id="Q8NH92"/>
<dbReference type="PhosphoSitePlus" id="Q8NH92"/>
<dbReference type="BioMuta" id="OR1S1"/>
<dbReference type="DMDM" id="218511728"/>
<dbReference type="MassIVE" id="Q8NH92"/>
<dbReference type="PaxDb" id="9606-ENSP00000311688"/>
<dbReference type="Antibodypedia" id="78312">
    <property type="antibodies" value="34 antibodies from 13 providers"/>
</dbReference>
<dbReference type="DNASU" id="219959"/>
<dbReference type="GeneID" id="219959"/>
<dbReference type="KEGG" id="hsa:219959"/>
<dbReference type="UCSC" id="uc010rkc.2">
    <property type="organism name" value="human"/>
</dbReference>
<dbReference type="AGR" id="HGNC:8227"/>
<dbReference type="CTD" id="219959"/>
<dbReference type="GeneCards" id="OR1S1"/>
<dbReference type="HGNC" id="HGNC:8227">
    <property type="gene designation" value="OR1S1"/>
</dbReference>
<dbReference type="neXtProt" id="NX_Q8NH92"/>
<dbReference type="PharmGKB" id="PA32098"/>
<dbReference type="VEuPathDB" id="HostDB:ENSG00000280204"/>
<dbReference type="eggNOG" id="ENOG502RQAM">
    <property type="taxonomic scope" value="Eukaryota"/>
</dbReference>
<dbReference type="HOGENOM" id="CLU_012526_1_0_1"/>
<dbReference type="InParanoid" id="Q8NH92"/>
<dbReference type="OrthoDB" id="9444602at2759"/>
<dbReference type="PAN-GO" id="Q8NH92">
    <property type="GO annotations" value="3 GO annotations based on evolutionary models"/>
</dbReference>
<dbReference type="PhylomeDB" id="Q8NH92"/>
<dbReference type="TreeFam" id="TF337210"/>
<dbReference type="PathwayCommons" id="Q8NH92"/>
<dbReference type="Reactome" id="R-HSA-9752946">
    <property type="pathway name" value="Expression and translocation of olfactory receptors"/>
</dbReference>
<dbReference type="BioGRID-ORCS" id="219959">
    <property type="hits" value="11 hits in 663 CRISPR screens"/>
</dbReference>
<dbReference type="GeneWiki" id="OR1S1"/>
<dbReference type="GenomeRNAi" id="219959"/>
<dbReference type="Pharos" id="Q8NH92">
    <property type="development level" value="Tdark"/>
</dbReference>
<dbReference type="PRO" id="PR:Q8NH92"/>
<dbReference type="Proteomes" id="UP000005640">
    <property type="component" value="Chromosome 11"/>
</dbReference>
<dbReference type="RNAct" id="Q8NH92">
    <property type="molecule type" value="protein"/>
</dbReference>
<dbReference type="GO" id="GO:0005886">
    <property type="term" value="C:plasma membrane"/>
    <property type="evidence" value="ECO:0000318"/>
    <property type="project" value="GO_Central"/>
</dbReference>
<dbReference type="GO" id="GO:0004930">
    <property type="term" value="F:G protein-coupled receptor activity"/>
    <property type="evidence" value="ECO:0007669"/>
    <property type="project" value="UniProtKB-KW"/>
</dbReference>
<dbReference type="GO" id="GO:0004984">
    <property type="term" value="F:olfactory receptor activity"/>
    <property type="evidence" value="ECO:0000318"/>
    <property type="project" value="GO_Central"/>
</dbReference>
<dbReference type="GO" id="GO:0007165">
    <property type="term" value="P:signal transduction"/>
    <property type="evidence" value="ECO:0000318"/>
    <property type="project" value="GO_Central"/>
</dbReference>
<dbReference type="CDD" id="cd15918">
    <property type="entry name" value="7tmA_OR1_7-like"/>
    <property type="match status" value="1"/>
</dbReference>
<dbReference type="FunFam" id="1.20.1070.10:FF:000009">
    <property type="entry name" value="Olfactory receptor"/>
    <property type="match status" value="1"/>
</dbReference>
<dbReference type="Gene3D" id="1.20.1070.10">
    <property type="entry name" value="Rhodopsin 7-helix transmembrane proteins"/>
    <property type="match status" value="1"/>
</dbReference>
<dbReference type="InterPro" id="IPR000276">
    <property type="entry name" value="GPCR_Rhodpsn"/>
</dbReference>
<dbReference type="InterPro" id="IPR017452">
    <property type="entry name" value="GPCR_Rhodpsn_7TM"/>
</dbReference>
<dbReference type="InterPro" id="IPR000725">
    <property type="entry name" value="Olfact_rcpt"/>
</dbReference>
<dbReference type="PANTHER" id="PTHR48001">
    <property type="entry name" value="OLFACTORY RECEPTOR"/>
    <property type="match status" value="1"/>
</dbReference>
<dbReference type="Pfam" id="PF13853">
    <property type="entry name" value="7tm_4"/>
    <property type="match status" value="1"/>
</dbReference>
<dbReference type="PRINTS" id="PR00237">
    <property type="entry name" value="GPCRRHODOPSN"/>
</dbReference>
<dbReference type="PRINTS" id="PR00245">
    <property type="entry name" value="OLFACTORYR"/>
</dbReference>
<dbReference type="SUPFAM" id="SSF81321">
    <property type="entry name" value="Family A G protein-coupled receptor-like"/>
    <property type="match status" value="1"/>
</dbReference>
<dbReference type="PROSITE" id="PS50262">
    <property type="entry name" value="G_PROTEIN_RECEP_F1_2"/>
    <property type="match status" value="1"/>
</dbReference>
<keyword id="KW-1003">Cell membrane</keyword>
<keyword id="KW-1015">Disulfide bond</keyword>
<keyword id="KW-0297">G-protein coupled receptor</keyword>
<keyword id="KW-0325">Glycoprotein</keyword>
<keyword id="KW-0472">Membrane</keyword>
<keyword id="KW-0552">Olfaction</keyword>
<keyword id="KW-0675">Receptor</keyword>
<keyword id="KW-1185">Reference proteome</keyword>
<keyword id="KW-0716">Sensory transduction</keyword>
<keyword id="KW-0807">Transducer</keyword>
<keyword id="KW-0812">Transmembrane</keyword>
<keyword id="KW-1133">Transmembrane helix</keyword>